<feature type="chain" id="PRO_0000189432" description="2-C-methyl-D-erythritol 2,4-cyclodiphosphate synthase">
    <location>
        <begin position="1"/>
        <end position="156"/>
    </location>
</feature>
<feature type="binding site" evidence="1">
    <location>
        <begin position="10"/>
        <end position="12"/>
    </location>
    <ligand>
        <name>4-CDP-2-C-methyl-D-erythritol 2-phosphate</name>
        <dbReference type="ChEBI" id="CHEBI:57919"/>
    </ligand>
</feature>
<feature type="binding site" evidence="1">
    <location>
        <position position="10"/>
    </location>
    <ligand>
        <name>a divalent metal cation</name>
        <dbReference type="ChEBI" id="CHEBI:60240"/>
    </ligand>
</feature>
<feature type="binding site" evidence="1">
    <location>
        <position position="12"/>
    </location>
    <ligand>
        <name>a divalent metal cation</name>
        <dbReference type="ChEBI" id="CHEBI:60240"/>
    </ligand>
</feature>
<feature type="binding site" evidence="1">
    <location>
        <begin position="36"/>
        <end position="37"/>
    </location>
    <ligand>
        <name>4-CDP-2-C-methyl-D-erythritol 2-phosphate</name>
        <dbReference type="ChEBI" id="CHEBI:57919"/>
    </ligand>
</feature>
<feature type="binding site" evidence="1">
    <location>
        <position position="44"/>
    </location>
    <ligand>
        <name>a divalent metal cation</name>
        <dbReference type="ChEBI" id="CHEBI:60240"/>
    </ligand>
</feature>
<feature type="binding site" evidence="1">
    <location>
        <begin position="58"/>
        <end position="60"/>
    </location>
    <ligand>
        <name>4-CDP-2-C-methyl-D-erythritol 2-phosphate</name>
        <dbReference type="ChEBI" id="CHEBI:57919"/>
    </ligand>
</feature>
<feature type="binding site" evidence="1">
    <location>
        <begin position="63"/>
        <end position="67"/>
    </location>
    <ligand>
        <name>4-CDP-2-C-methyl-D-erythritol 2-phosphate</name>
        <dbReference type="ChEBI" id="CHEBI:57919"/>
    </ligand>
</feature>
<feature type="site" description="Transition state stabilizer" evidence="1">
    <location>
        <position position="36"/>
    </location>
</feature>
<keyword id="KW-0414">Isoprene biosynthesis</keyword>
<keyword id="KW-0456">Lyase</keyword>
<keyword id="KW-0479">Metal-binding</keyword>
<keyword id="KW-1185">Reference proteome</keyword>
<dbReference type="EC" id="4.6.1.12" evidence="1"/>
<dbReference type="EMBL" id="AE000657">
    <property type="protein sequence ID" value="AAC07056.1"/>
    <property type="molecule type" value="Genomic_DNA"/>
</dbReference>
<dbReference type="PIR" id="F70382">
    <property type="entry name" value="F70382"/>
</dbReference>
<dbReference type="RefSeq" id="NP_213652.1">
    <property type="nucleotide sequence ID" value="NC_000918.1"/>
</dbReference>
<dbReference type="RefSeq" id="WP_010880590.1">
    <property type="nucleotide sequence ID" value="NC_000918.1"/>
</dbReference>
<dbReference type="SMR" id="O67089"/>
<dbReference type="FunCoup" id="O67089">
    <property type="interactions" value="324"/>
</dbReference>
<dbReference type="STRING" id="224324.aq_957"/>
<dbReference type="EnsemblBacteria" id="AAC07056">
    <property type="protein sequence ID" value="AAC07056"/>
    <property type="gene ID" value="aq_957"/>
</dbReference>
<dbReference type="KEGG" id="aae:aq_957"/>
<dbReference type="PATRIC" id="fig|224324.8.peg.750"/>
<dbReference type="eggNOG" id="COG0245">
    <property type="taxonomic scope" value="Bacteria"/>
</dbReference>
<dbReference type="HOGENOM" id="CLU_084630_2_1_0"/>
<dbReference type="InParanoid" id="O67089"/>
<dbReference type="OrthoDB" id="9806837at2"/>
<dbReference type="UniPathway" id="UPA00056">
    <property type="reaction ID" value="UER00095"/>
</dbReference>
<dbReference type="Proteomes" id="UP000000798">
    <property type="component" value="Chromosome"/>
</dbReference>
<dbReference type="GO" id="GO:0008685">
    <property type="term" value="F:2-C-methyl-D-erythritol 2,4-cyclodiphosphate synthase activity"/>
    <property type="evidence" value="ECO:0000318"/>
    <property type="project" value="GO_Central"/>
</dbReference>
<dbReference type="GO" id="GO:0046872">
    <property type="term" value="F:metal ion binding"/>
    <property type="evidence" value="ECO:0007669"/>
    <property type="project" value="UniProtKB-KW"/>
</dbReference>
<dbReference type="GO" id="GO:0019288">
    <property type="term" value="P:isopentenyl diphosphate biosynthetic process, methylerythritol 4-phosphate pathway"/>
    <property type="evidence" value="ECO:0007669"/>
    <property type="project" value="UniProtKB-UniRule"/>
</dbReference>
<dbReference type="GO" id="GO:0016114">
    <property type="term" value="P:terpenoid biosynthetic process"/>
    <property type="evidence" value="ECO:0007669"/>
    <property type="project" value="InterPro"/>
</dbReference>
<dbReference type="CDD" id="cd00554">
    <property type="entry name" value="MECDP_synthase"/>
    <property type="match status" value="1"/>
</dbReference>
<dbReference type="FunFam" id="3.30.1330.50:FF:000003">
    <property type="entry name" value="2-C-methyl-D-erythritol 2,4-cyclodiphosphate synthase"/>
    <property type="match status" value="1"/>
</dbReference>
<dbReference type="Gene3D" id="3.30.1330.50">
    <property type="entry name" value="2-C-methyl-D-erythritol 2,4-cyclodiphosphate synthase"/>
    <property type="match status" value="1"/>
</dbReference>
<dbReference type="HAMAP" id="MF_00107">
    <property type="entry name" value="IspF"/>
    <property type="match status" value="1"/>
</dbReference>
<dbReference type="InterPro" id="IPR003526">
    <property type="entry name" value="MECDP_synthase"/>
</dbReference>
<dbReference type="InterPro" id="IPR020555">
    <property type="entry name" value="MECDP_synthase_CS"/>
</dbReference>
<dbReference type="InterPro" id="IPR036571">
    <property type="entry name" value="MECDP_synthase_sf"/>
</dbReference>
<dbReference type="NCBIfam" id="TIGR00151">
    <property type="entry name" value="ispF"/>
    <property type="match status" value="1"/>
</dbReference>
<dbReference type="PANTHER" id="PTHR43181">
    <property type="entry name" value="2-C-METHYL-D-ERYTHRITOL 2,4-CYCLODIPHOSPHATE SYNTHASE, CHLOROPLASTIC"/>
    <property type="match status" value="1"/>
</dbReference>
<dbReference type="PANTHER" id="PTHR43181:SF1">
    <property type="entry name" value="2-C-METHYL-D-ERYTHRITOL 2,4-CYCLODIPHOSPHATE SYNTHASE, CHLOROPLASTIC"/>
    <property type="match status" value="1"/>
</dbReference>
<dbReference type="Pfam" id="PF02542">
    <property type="entry name" value="YgbB"/>
    <property type="match status" value="1"/>
</dbReference>
<dbReference type="SUPFAM" id="SSF69765">
    <property type="entry name" value="IpsF-like"/>
    <property type="match status" value="1"/>
</dbReference>
<dbReference type="PROSITE" id="PS01350">
    <property type="entry name" value="ISPF"/>
    <property type="match status" value="1"/>
</dbReference>
<accession>O67089</accession>
<reference key="1">
    <citation type="journal article" date="1998" name="Nature">
        <title>The complete genome of the hyperthermophilic bacterium Aquifex aeolicus.</title>
        <authorList>
            <person name="Deckert G."/>
            <person name="Warren P.V."/>
            <person name="Gaasterland T."/>
            <person name="Young W.G."/>
            <person name="Lenox A.L."/>
            <person name="Graham D.E."/>
            <person name="Overbeek R."/>
            <person name="Snead M.A."/>
            <person name="Keller M."/>
            <person name="Aujay M."/>
            <person name="Huber R."/>
            <person name="Feldman R.A."/>
            <person name="Short J.M."/>
            <person name="Olsen G.J."/>
            <person name="Swanson R.V."/>
        </authorList>
    </citation>
    <scope>NUCLEOTIDE SEQUENCE [LARGE SCALE GENOMIC DNA]</scope>
    <source>
        <strain>VF5</strain>
    </source>
</reference>
<name>ISPF_AQUAE</name>
<organism>
    <name type="scientific">Aquifex aeolicus (strain VF5)</name>
    <dbReference type="NCBI Taxonomy" id="224324"/>
    <lineage>
        <taxon>Bacteria</taxon>
        <taxon>Pseudomonadati</taxon>
        <taxon>Aquificota</taxon>
        <taxon>Aquificia</taxon>
        <taxon>Aquificales</taxon>
        <taxon>Aquificaceae</taxon>
        <taxon>Aquifex</taxon>
    </lineage>
</organism>
<proteinExistence type="inferred from homology"/>
<protein>
    <recommendedName>
        <fullName evidence="1">2-C-methyl-D-erythritol 2,4-cyclodiphosphate synthase</fullName>
        <shortName evidence="1">MECDP-synthase</shortName>
        <shortName evidence="1">MECPP-synthase</shortName>
        <shortName evidence="1">MECPS</shortName>
        <ecNumber evidence="1">4.6.1.12</ecNumber>
    </recommendedName>
</protein>
<sequence>MELRIGFGFDSHEFVEGKLLILGGVEIEKDYGLKGHSDGDALLHAITDAILGALGERDIGEIFKDTDPRWKNAPSRIFLEKALEVMSEKGFNISNIDCVIVADRPKIAPHKERIKESLSKLLGIPKERISLKGKRREGFCEGNGLVCMCTVLLVKM</sequence>
<gene>
    <name evidence="1" type="primary">ispF</name>
    <name type="ordered locus">aq_957</name>
</gene>
<evidence type="ECO:0000255" key="1">
    <source>
        <dbReference type="HAMAP-Rule" id="MF_00107"/>
    </source>
</evidence>
<comment type="function">
    <text evidence="1">Involved in the biosynthesis of isopentenyl diphosphate (IPP) and dimethylallyl diphosphate (DMAPP), two major building blocks of isoprenoid compounds. Catalyzes the conversion of 4-diphosphocytidyl-2-C-methyl-D-erythritol 2-phosphate (CDP-ME2P) to 2-C-methyl-D-erythritol 2,4-cyclodiphosphate (ME-CPP) with a corresponding release of cytidine 5-monophosphate (CMP).</text>
</comment>
<comment type="catalytic activity">
    <reaction evidence="1">
        <text>4-CDP-2-C-methyl-D-erythritol 2-phosphate = 2-C-methyl-D-erythritol 2,4-cyclic diphosphate + CMP</text>
        <dbReference type="Rhea" id="RHEA:23864"/>
        <dbReference type="ChEBI" id="CHEBI:57919"/>
        <dbReference type="ChEBI" id="CHEBI:58483"/>
        <dbReference type="ChEBI" id="CHEBI:60377"/>
        <dbReference type="EC" id="4.6.1.12"/>
    </reaction>
</comment>
<comment type="cofactor">
    <cofactor evidence="1">
        <name>a divalent metal cation</name>
        <dbReference type="ChEBI" id="CHEBI:60240"/>
    </cofactor>
    <text evidence="1">Binds 1 divalent metal cation per subunit.</text>
</comment>
<comment type="pathway">
    <text evidence="1">Isoprenoid biosynthesis; isopentenyl diphosphate biosynthesis via DXP pathway; isopentenyl diphosphate from 1-deoxy-D-xylulose 5-phosphate: step 4/6.</text>
</comment>
<comment type="subunit">
    <text evidence="1">Homotrimer.</text>
</comment>
<comment type="similarity">
    <text evidence="1">Belongs to the IspF family.</text>
</comment>